<proteinExistence type="inferred from homology"/>
<protein>
    <recommendedName>
        <fullName>Probable replication endonuclease from prophage-like region</fullName>
        <ecNumber>3.1.-.-</ecNumber>
    </recommendedName>
</protein>
<name>ENDPH_SHIBS</name>
<keyword id="KW-0235">DNA replication</keyword>
<keyword id="KW-0255">Endonuclease</keyword>
<keyword id="KW-0378">Hydrolase</keyword>
<keyword id="KW-0540">Nuclease</keyword>
<reference key="1">
    <citation type="journal article" date="2005" name="Nucleic Acids Res.">
        <title>Genome dynamics and diversity of Shigella species, the etiologic agents of bacillary dysentery.</title>
        <authorList>
            <person name="Yang F."/>
            <person name="Yang J."/>
            <person name="Zhang X."/>
            <person name="Chen L."/>
            <person name="Jiang Y."/>
            <person name="Yan Y."/>
            <person name="Tang X."/>
            <person name="Wang J."/>
            <person name="Xiong Z."/>
            <person name="Dong J."/>
            <person name="Xue Y."/>
            <person name="Zhu Y."/>
            <person name="Xu X."/>
            <person name="Sun L."/>
            <person name="Chen S."/>
            <person name="Nie H."/>
            <person name="Peng J."/>
            <person name="Xu J."/>
            <person name="Wang Y."/>
            <person name="Yuan Z."/>
            <person name="Wen Y."/>
            <person name="Yao Z."/>
            <person name="Shen Y."/>
            <person name="Qiang B."/>
            <person name="Hou Y."/>
            <person name="Yu J."/>
            <person name="Jin Q."/>
        </authorList>
    </citation>
    <scope>NUCLEOTIDE SEQUENCE [LARGE SCALE GENOMIC DNA]</scope>
    <source>
        <strain>Sb227</strain>
    </source>
</reference>
<sequence length="804" mass="92410">MSHADMNNCCGFNEAAAAFSWNSPKKAINPYLDPAEVAPVSALSNLITLYAADNEQEQLRREALSDQVWERYFFYESRDPVQHEMEQDKLISRAKLAHEQQRFNPDMVILADVNAQPSHISKPLMQRIEYFSSLGRPKAYSRYLRETIKPCLERLEHVRDSQLSASFRFMASHVGLDGLLILPEMSQDQVKRLSTLVAAHMSMCLDAACGDLYATDDVKPEEIRKTWEKVAAETLRLDVIPPAFEQLRRKRNRRKPVPYELIPGSLARMLCADWWYRKLWKMRCEWREEQLRAVCLVSKKASPYVSYEAVMHKREQRRKSLEFFRSHELVNEEGDTLDMEDVVNASSSNPAHRRNEMMACVKGLELIAEMRGDCAVFYTITCPSRFHSTLNNGRPNPTWTNATVRQSSDYLVGMFAAFRKAMHKAGLRWYGVRVAEPHHDGTVHWHLLCFMRKKDRRAITALLRKFAIREDREELGNNTGPRFKSELINPRKGTPTSYIAKYISKNIDGRGLAGEISKETGKSLRDNAEYVNPWASLHRVQQFRFFGIPGRQAYRELRLLAGQAARQQGDKKAGAPVLDNPRLDAILAAADAGCFATYIMRQGGVLVPRKYHLIRTAYEINEEPTAYGDHGIRIYGIWSPIAEGKICTHAVKWKMVRKAVDVQEAAADQGACAPWTRGNNCLLAENLNQQEKDKSADGNPRTDITSMDDKELHDYLHSMSKKERRELAARLRLVKPKRRKDYKQRITDHQRLQLVYELKSRGFDGSEKEVDLLLRGGSIPSGAGLRIFYRNQRLQEDDQWRNLY</sequence>
<comment type="function">
    <text evidence="2">Possible endonuclease which induces a single-strand cut and initiates DNA replication.</text>
</comment>
<comment type="similarity">
    <text evidence="2">Belongs to the phage GPA family.</text>
</comment>
<feature type="chain" id="PRO_0000278169" description="Probable replication endonuclease from prophage-like region">
    <location>
        <begin position="1"/>
        <end position="804"/>
    </location>
</feature>
<feature type="active site" description="O-(5'-phospho-DNA)-tyrosine intermediate" evidence="1">
    <location>
        <position position="498"/>
    </location>
</feature>
<feature type="active site" description="O-(5'-phospho-DNA)-tyrosine intermediate" evidence="1">
    <location>
        <position position="502"/>
    </location>
</feature>
<accession>Q323T3</accession>
<gene>
    <name type="ordered locus">SBO_0752</name>
</gene>
<dbReference type="EC" id="3.1.-.-"/>
<dbReference type="EMBL" id="CP000036">
    <property type="protein sequence ID" value="ABB65425.1"/>
    <property type="molecule type" value="Genomic_DNA"/>
</dbReference>
<dbReference type="RefSeq" id="WP_000017483.1">
    <property type="nucleotide sequence ID" value="NC_007613.1"/>
</dbReference>
<dbReference type="KEGG" id="sbo:SBO_0752"/>
<dbReference type="HOGENOM" id="CLU_013772_2_0_6"/>
<dbReference type="Proteomes" id="UP000007067">
    <property type="component" value="Chromosome"/>
</dbReference>
<dbReference type="GO" id="GO:0004519">
    <property type="term" value="F:endonuclease activity"/>
    <property type="evidence" value="ECO:0007669"/>
    <property type="project" value="UniProtKB-KW"/>
</dbReference>
<dbReference type="GO" id="GO:0006260">
    <property type="term" value="P:DNA replication"/>
    <property type="evidence" value="ECO:0007669"/>
    <property type="project" value="UniProtKB-KW"/>
</dbReference>
<dbReference type="InterPro" id="IPR008766">
    <property type="entry name" value="Replication_gene_A-like"/>
</dbReference>
<dbReference type="Pfam" id="PF05840">
    <property type="entry name" value="Phage_GPA"/>
    <property type="match status" value="1"/>
</dbReference>
<organism>
    <name type="scientific">Shigella boydii serotype 4 (strain Sb227)</name>
    <dbReference type="NCBI Taxonomy" id="300268"/>
    <lineage>
        <taxon>Bacteria</taxon>
        <taxon>Pseudomonadati</taxon>
        <taxon>Pseudomonadota</taxon>
        <taxon>Gammaproteobacteria</taxon>
        <taxon>Enterobacterales</taxon>
        <taxon>Enterobacteriaceae</taxon>
        <taxon>Shigella</taxon>
    </lineage>
</organism>
<evidence type="ECO:0000250" key="1"/>
<evidence type="ECO:0000305" key="2"/>